<accession>P55095</accession>
<accession>Q3UFE9</accession>
<evidence type="ECO:0000250" key="1"/>
<evidence type="ECO:0000250" key="2">
    <source>
        <dbReference type="UniProtKB" id="P01274"/>
    </source>
</evidence>
<evidence type="ECO:0000250" key="3">
    <source>
        <dbReference type="UniProtKB" id="P01275"/>
    </source>
</evidence>
<evidence type="ECO:0000250" key="4">
    <source>
        <dbReference type="UniProtKB" id="P06883"/>
    </source>
</evidence>
<evidence type="ECO:0000250" key="5">
    <source>
        <dbReference type="UniProtKB" id="P09686"/>
    </source>
</evidence>
<evidence type="ECO:0000250" key="6">
    <source>
        <dbReference type="UniProtKB" id="P15438"/>
    </source>
</evidence>
<evidence type="ECO:0000256" key="7">
    <source>
        <dbReference type="SAM" id="MobiDB-lite"/>
    </source>
</evidence>
<evidence type="ECO:0000269" key="8">
    <source>
    </source>
</evidence>
<evidence type="ECO:0000305" key="9"/>
<evidence type="ECO:0000305" key="10">
    <source>
    </source>
</evidence>
<evidence type="ECO:0000305" key="11">
    <source>
    </source>
</evidence>
<evidence type="ECO:0000305" key="12">
    <source>
    </source>
</evidence>
<evidence type="ECO:0000305" key="13">
    <source>
    </source>
</evidence>
<evidence type="ECO:0000305" key="14">
    <source>
    </source>
</evidence>
<evidence type="ECO:0007744" key="15">
    <source>
    </source>
</evidence>
<keyword id="KW-0027">Amidation</keyword>
<keyword id="KW-0165">Cleavage on pair of basic residues</keyword>
<keyword id="KW-0372">Hormone</keyword>
<keyword id="KW-0597">Phosphoprotein</keyword>
<keyword id="KW-1185">Reference proteome</keyword>
<keyword id="KW-0964">Secreted</keyword>
<keyword id="KW-0732">Signal</keyword>
<reference key="1">
    <citation type="journal article" date="1995" name="J. Biol. Chem.">
        <title>Processing of mouse proglucagon by recombinant prohormone convertase 1 and immunopurified prohormone convertase 2 in vitro.</title>
        <authorList>
            <person name="Rothenberg M.E."/>
            <person name="Eilertson C.D."/>
            <person name="Klein K."/>
            <person name="Zhou Y."/>
            <person name="Linberg I."/>
            <person name="McDonald J.K."/>
            <person name="Mackin R.B."/>
            <person name="Noe B.D."/>
        </authorList>
    </citation>
    <scope>NUCLEOTIDE SEQUENCE [MRNA]</scope>
    <source>
        <tissue>Pancreatic islet</tissue>
    </source>
</reference>
<reference key="2">
    <citation type="submission" date="2000-06" db="EMBL/GenBank/DDBJ databases">
        <title>Mouse glucagon full length cDNA.</title>
        <authorList>
            <person name="Shamsadin R."/>
            <person name="Knepel W."/>
        </authorList>
    </citation>
    <scope>NUCLEOTIDE SEQUENCE [MRNA]</scope>
</reference>
<reference key="3">
    <citation type="journal article" date="2005" name="Science">
        <title>The transcriptional landscape of the mammalian genome.</title>
        <authorList>
            <person name="Carninci P."/>
            <person name="Kasukawa T."/>
            <person name="Katayama S."/>
            <person name="Gough J."/>
            <person name="Frith M.C."/>
            <person name="Maeda N."/>
            <person name="Oyama R."/>
            <person name="Ravasi T."/>
            <person name="Lenhard B."/>
            <person name="Wells C."/>
            <person name="Kodzius R."/>
            <person name="Shimokawa K."/>
            <person name="Bajic V.B."/>
            <person name="Brenner S.E."/>
            <person name="Batalov S."/>
            <person name="Forrest A.R."/>
            <person name="Zavolan M."/>
            <person name="Davis M.J."/>
            <person name="Wilming L.G."/>
            <person name="Aidinis V."/>
            <person name="Allen J.E."/>
            <person name="Ambesi-Impiombato A."/>
            <person name="Apweiler R."/>
            <person name="Aturaliya R.N."/>
            <person name="Bailey T.L."/>
            <person name="Bansal M."/>
            <person name="Baxter L."/>
            <person name="Beisel K.W."/>
            <person name="Bersano T."/>
            <person name="Bono H."/>
            <person name="Chalk A.M."/>
            <person name="Chiu K.P."/>
            <person name="Choudhary V."/>
            <person name="Christoffels A."/>
            <person name="Clutterbuck D.R."/>
            <person name="Crowe M.L."/>
            <person name="Dalla E."/>
            <person name="Dalrymple B.P."/>
            <person name="de Bono B."/>
            <person name="Della Gatta G."/>
            <person name="di Bernardo D."/>
            <person name="Down T."/>
            <person name="Engstrom P."/>
            <person name="Fagiolini M."/>
            <person name="Faulkner G."/>
            <person name="Fletcher C.F."/>
            <person name="Fukushima T."/>
            <person name="Furuno M."/>
            <person name="Futaki S."/>
            <person name="Gariboldi M."/>
            <person name="Georgii-Hemming P."/>
            <person name="Gingeras T.R."/>
            <person name="Gojobori T."/>
            <person name="Green R.E."/>
            <person name="Gustincich S."/>
            <person name="Harbers M."/>
            <person name="Hayashi Y."/>
            <person name="Hensch T.K."/>
            <person name="Hirokawa N."/>
            <person name="Hill D."/>
            <person name="Huminiecki L."/>
            <person name="Iacono M."/>
            <person name="Ikeo K."/>
            <person name="Iwama A."/>
            <person name="Ishikawa T."/>
            <person name="Jakt M."/>
            <person name="Kanapin A."/>
            <person name="Katoh M."/>
            <person name="Kawasawa Y."/>
            <person name="Kelso J."/>
            <person name="Kitamura H."/>
            <person name="Kitano H."/>
            <person name="Kollias G."/>
            <person name="Krishnan S.P."/>
            <person name="Kruger A."/>
            <person name="Kummerfeld S.K."/>
            <person name="Kurochkin I.V."/>
            <person name="Lareau L.F."/>
            <person name="Lazarevic D."/>
            <person name="Lipovich L."/>
            <person name="Liu J."/>
            <person name="Liuni S."/>
            <person name="McWilliam S."/>
            <person name="Madan Babu M."/>
            <person name="Madera M."/>
            <person name="Marchionni L."/>
            <person name="Matsuda H."/>
            <person name="Matsuzawa S."/>
            <person name="Miki H."/>
            <person name="Mignone F."/>
            <person name="Miyake S."/>
            <person name="Morris K."/>
            <person name="Mottagui-Tabar S."/>
            <person name="Mulder N."/>
            <person name="Nakano N."/>
            <person name="Nakauchi H."/>
            <person name="Ng P."/>
            <person name="Nilsson R."/>
            <person name="Nishiguchi S."/>
            <person name="Nishikawa S."/>
            <person name="Nori F."/>
            <person name="Ohara O."/>
            <person name="Okazaki Y."/>
            <person name="Orlando V."/>
            <person name="Pang K.C."/>
            <person name="Pavan W.J."/>
            <person name="Pavesi G."/>
            <person name="Pesole G."/>
            <person name="Petrovsky N."/>
            <person name="Piazza S."/>
            <person name="Reed J."/>
            <person name="Reid J.F."/>
            <person name="Ring B.Z."/>
            <person name="Ringwald M."/>
            <person name="Rost B."/>
            <person name="Ruan Y."/>
            <person name="Salzberg S.L."/>
            <person name="Sandelin A."/>
            <person name="Schneider C."/>
            <person name="Schoenbach C."/>
            <person name="Sekiguchi K."/>
            <person name="Semple C.A."/>
            <person name="Seno S."/>
            <person name="Sessa L."/>
            <person name="Sheng Y."/>
            <person name="Shibata Y."/>
            <person name="Shimada H."/>
            <person name="Shimada K."/>
            <person name="Silva D."/>
            <person name="Sinclair B."/>
            <person name="Sperling S."/>
            <person name="Stupka E."/>
            <person name="Sugiura K."/>
            <person name="Sultana R."/>
            <person name="Takenaka Y."/>
            <person name="Taki K."/>
            <person name="Tammoja K."/>
            <person name="Tan S.L."/>
            <person name="Tang S."/>
            <person name="Taylor M.S."/>
            <person name="Tegner J."/>
            <person name="Teichmann S.A."/>
            <person name="Ueda H.R."/>
            <person name="van Nimwegen E."/>
            <person name="Verardo R."/>
            <person name="Wei C.L."/>
            <person name="Yagi K."/>
            <person name="Yamanishi H."/>
            <person name="Zabarovsky E."/>
            <person name="Zhu S."/>
            <person name="Zimmer A."/>
            <person name="Hide W."/>
            <person name="Bult C."/>
            <person name="Grimmond S.M."/>
            <person name="Teasdale R.D."/>
            <person name="Liu E.T."/>
            <person name="Brusic V."/>
            <person name="Quackenbush J."/>
            <person name="Wahlestedt C."/>
            <person name="Mattick J.S."/>
            <person name="Hume D.A."/>
            <person name="Kai C."/>
            <person name="Sasaki D."/>
            <person name="Tomaru Y."/>
            <person name="Fukuda S."/>
            <person name="Kanamori-Katayama M."/>
            <person name="Suzuki M."/>
            <person name="Aoki J."/>
            <person name="Arakawa T."/>
            <person name="Iida J."/>
            <person name="Imamura K."/>
            <person name="Itoh M."/>
            <person name="Kato T."/>
            <person name="Kawaji H."/>
            <person name="Kawagashira N."/>
            <person name="Kawashima T."/>
            <person name="Kojima M."/>
            <person name="Kondo S."/>
            <person name="Konno H."/>
            <person name="Nakano K."/>
            <person name="Ninomiya N."/>
            <person name="Nishio T."/>
            <person name="Okada M."/>
            <person name="Plessy C."/>
            <person name="Shibata K."/>
            <person name="Shiraki T."/>
            <person name="Suzuki S."/>
            <person name="Tagami M."/>
            <person name="Waki K."/>
            <person name="Watahiki A."/>
            <person name="Okamura-Oho Y."/>
            <person name="Suzuki H."/>
            <person name="Kawai J."/>
            <person name="Hayashizaki Y."/>
        </authorList>
    </citation>
    <scope>NUCLEOTIDE SEQUENCE [LARGE SCALE MRNA]</scope>
    <source>
        <strain>C57BL/6J</strain>
        <tissue>Pancreas</tissue>
    </source>
</reference>
<reference key="4">
    <citation type="journal article" date="2004" name="Genome Res.">
        <title>The status, quality, and expansion of the NIH full-length cDNA project: the Mammalian Gene Collection (MGC).</title>
        <authorList>
            <consortium name="The MGC Project Team"/>
        </authorList>
    </citation>
    <scope>NUCLEOTIDE SEQUENCE [LARGE SCALE MRNA]</scope>
    <source>
        <strain>FVB/N</strain>
        <tissue>Colon</tissue>
    </source>
</reference>
<reference key="5">
    <citation type="journal article" date="1991" name="Pancreas">
        <title>GLP-1 and GLP-1(7-36) amide: influences on basal and stimulated insulin and glucagon secretion in the mouse.</title>
        <authorList>
            <person name="Fridolf T."/>
            <person name="Bottcher G."/>
            <person name="Sundler F."/>
            <person name="Ahren B."/>
        </authorList>
    </citation>
    <scope>FUNCTION OF GLP-1 AND GLP-1(7-36) AMIDE</scope>
</reference>
<reference key="6">
    <citation type="journal article" date="1997" name="J. Biol. Chem.">
        <title>Role of the prohormone convertase PC3 in the processing of proglucagon to glucagon-like peptide 1.</title>
        <authorList>
            <person name="Rouille Y."/>
            <person name="Kantengwa S."/>
            <person name="Irminger J.C."/>
            <person name="Halban P.A."/>
        </authorList>
    </citation>
    <scope>PROTEOLYTIC PROCESSING BY PCSK1</scope>
</reference>
<reference key="7">
    <citation type="journal article" date="2001" name="J. Biol. Chem.">
        <title>Severe defect in proglucagon processing in islet A-cells of prohormone convertase 2 null mice.</title>
        <authorList>
            <person name="Furuta M."/>
            <person name="Zhou A."/>
            <person name="Webb G."/>
            <person name="Carroll R."/>
            <person name="Ravazzola M."/>
            <person name="Orci L."/>
            <person name="Steiner D.F."/>
        </authorList>
    </citation>
    <scope>PROTEOLYTIC PROCESSING BY PCSK2</scope>
</reference>
<reference key="8">
    <citation type="journal article" date="1999" name="Endocr. Rev.">
        <title>The glucagon-like peptides.</title>
        <authorList>
            <person name="Kieffer T.J."/>
            <person name="Habener J.F."/>
        </authorList>
    </citation>
    <scope>REVIEW</scope>
</reference>
<reference key="9">
    <citation type="journal article" date="1999" name="Trends Endocrinol. Metab.">
        <title>Glucagon-like peptide 2.</title>
        <authorList>
            <person name="Drucker D.J."/>
        </authorList>
    </citation>
    <scope>REVIEW</scope>
</reference>
<reference key="10">
    <citation type="journal article" date="2003" name="Am. J. Physiol.">
        <title>Glucagon and regulation of glucose metabolism.</title>
        <authorList>
            <person name="Jiang G."/>
            <person name="Zhang B.B."/>
        </authorList>
    </citation>
    <scope>REVIEW</scope>
</reference>
<reference key="11">
    <citation type="journal article" date="2003" name="Can. J. Physiol. Pharmacol.">
        <title>Direct and indirect mechanisms regulating secretion of glucagon-like peptide-1 and glucagon-like peptide-2.</title>
        <authorList>
            <person name="Brubaker P.L."/>
            <person name="Anini Y."/>
        </authorList>
    </citation>
    <scope>REVIEW</scope>
</reference>
<reference key="12">
    <citation type="journal article" date="2003" name="Mol. Endocrinol.">
        <title>Glucagon-like peptides: regulators of cell proliferation, differentiation, and apoptosis.</title>
        <authorList>
            <person name="Drucker D.J."/>
        </authorList>
    </citation>
    <scope>REVIEW</scope>
</reference>
<reference key="13">
    <citation type="journal article" date="2010" name="Cell">
        <title>A tissue-specific atlas of mouse protein phosphorylation and expression.</title>
        <authorList>
            <person name="Huttlin E.L."/>
            <person name="Jedrychowski M.P."/>
            <person name="Elias J.E."/>
            <person name="Goswami T."/>
            <person name="Rad R."/>
            <person name="Beausoleil S.A."/>
            <person name="Villen J."/>
            <person name="Haas W."/>
            <person name="Sowa M.E."/>
            <person name="Gygi S.P."/>
        </authorList>
    </citation>
    <scope>PHOSPHORYLATION [LARGE SCALE ANALYSIS] AT SER-54; SER-105; SER-108; SER-150 AND SER-152</scope>
    <scope>IDENTIFICATION BY MASS SPECTROMETRY [LARGE SCALE ANALYSIS]</scope>
    <source>
        <tissue>Pancreas</tissue>
        <tissue>Spleen</tissue>
    </source>
</reference>
<reference key="14">
    <citation type="journal article" date="2011" name="Nat. Med.">
        <title>Interleukin-6 enhances insulin secretion by increasing glucagon-like peptide-1 secretion from L cells and alpha cells.</title>
        <authorList>
            <person name="Ellingsgaard H."/>
            <person name="Hauselmann I."/>
            <person name="Schuler B."/>
            <person name="Habib A.M."/>
            <person name="Baggio L.L."/>
            <person name="Meier D.T."/>
            <person name="Eppler E."/>
            <person name="Bouzakri K."/>
            <person name="Wueest S."/>
            <person name="Muller Y.D."/>
            <person name="Hansen A.M."/>
            <person name="Reinecke M."/>
            <person name="Konrad D."/>
            <person name="Gassmann M."/>
            <person name="Reimann F."/>
            <person name="Halban P.A."/>
            <person name="Gromada J."/>
            <person name="Drucker D.J."/>
            <person name="Gribble F.M."/>
            <person name="Ehses J.A."/>
            <person name="Donath M.Y."/>
        </authorList>
    </citation>
    <scope>INDUCTION BY EXERCISE (GLUCAGON-LIKE PEPTIDE 1)</scope>
    <scope>FUNCTION (GLUCAGON-LIKE PEPTIDE 1)</scope>
    <scope>TISSUE SPECIFICITY (GLUCAGON-LIKE PEPTIDE 1)</scope>
</reference>
<sequence>MKTIYFVAGLLIMLVQGSWQHALQDTEENPRSFPASQTEAHEDPDEMNEDKRHSQGTFTSDYSKYLDSRRAQDFVQWLMNTKRNRNNIAKRHDEFERHAEGTFTSDVSSYLEGQAAKEFIAWLVKGRGRRDFPEEVAIAEELGRRHADGSFSDEMSTILDNLATRDFINWLIQTKITDKK</sequence>
<proteinExistence type="evidence at protein level"/>
<gene>
    <name type="primary">Gcg</name>
</gene>
<feature type="signal peptide" evidence="2">
    <location>
        <begin position="1"/>
        <end position="20"/>
    </location>
</feature>
<feature type="peptide" id="PRO_0000011273" description="Glicentin" evidence="2">
    <location>
        <begin position="21"/>
        <end position="89"/>
    </location>
</feature>
<feature type="peptide" id="PRO_0000011274" description="Glicentin-related polypeptide" evidence="5">
    <location>
        <begin position="21"/>
        <end position="50"/>
    </location>
</feature>
<feature type="peptide" id="PRO_0000011275" description="Oxyntomodulin" evidence="4">
    <location>
        <begin position="53"/>
        <end position="89"/>
    </location>
</feature>
<feature type="peptide" id="PRO_0000011276" description="Glucagon" evidence="3">
    <location>
        <begin position="53"/>
        <end position="81"/>
    </location>
</feature>
<feature type="propeptide" id="PRO_0000011277" evidence="3">
    <location>
        <begin position="84"/>
        <end position="89"/>
    </location>
</feature>
<feature type="peptide" id="PRO_0000011278" description="Glucagon-like peptide 1" evidence="3">
    <location>
        <begin position="92"/>
        <end position="128"/>
    </location>
</feature>
<feature type="peptide" id="PRO_0000011279" description="Glucagon-like peptide 1(7-37)" evidence="3">
    <location>
        <begin position="98"/>
        <end position="128"/>
    </location>
</feature>
<feature type="peptide" id="PRO_0000011280" description="Glucagon-like peptide 1(7-36)" evidence="3">
    <location>
        <begin position="98"/>
        <end position="127"/>
    </location>
</feature>
<feature type="propeptide" id="PRO_0000011281" evidence="6">
    <location>
        <begin position="131"/>
        <end position="145"/>
    </location>
</feature>
<feature type="peptide" id="PRO_0000011282" description="Glucagon-like peptide 2" evidence="6">
    <location>
        <begin position="146"/>
        <end position="178"/>
    </location>
</feature>
<feature type="region of interest" description="Disordered" evidence="7">
    <location>
        <begin position="25"/>
        <end position="58"/>
    </location>
</feature>
<feature type="site" description="Cleavage; by PCSK2">
    <location>
        <begin position="52"/>
        <end position="53"/>
    </location>
</feature>
<feature type="site" description="Cleavage; by PCSK1 and PCSK2">
    <location>
        <begin position="83"/>
        <end position="84"/>
    </location>
</feature>
<feature type="site" description="Cleavage; by PCSK1">
    <location>
        <begin position="91"/>
        <end position="92"/>
    </location>
</feature>
<feature type="site" description="Cleavage; by PCSK1">
    <location>
        <begin position="97"/>
        <end position="98"/>
    </location>
</feature>
<feature type="site" description="Cleavage; by PCSK1">
    <location>
        <begin position="130"/>
        <end position="131"/>
    </location>
</feature>
<feature type="site" description="Cleavage; by PCSK1">
    <location>
        <begin position="145"/>
        <end position="146"/>
    </location>
</feature>
<feature type="modified residue" description="Phosphoserine" evidence="15">
    <location>
        <position position="54"/>
    </location>
</feature>
<feature type="modified residue" description="Phosphoserine" evidence="15">
    <location>
        <position position="105"/>
    </location>
</feature>
<feature type="modified residue" description="Phosphoserine" evidence="15">
    <location>
        <position position="108"/>
    </location>
</feature>
<feature type="modified residue" description="Arginine amide" evidence="1">
    <location>
        <position position="127"/>
    </location>
</feature>
<feature type="modified residue" description="Phosphoserine" evidence="15">
    <location>
        <position position="150"/>
    </location>
</feature>
<feature type="modified residue" description="Phosphoserine" evidence="15">
    <location>
        <position position="152"/>
    </location>
</feature>
<name>GLUC_MOUSE</name>
<protein>
    <recommendedName>
        <fullName>Pro-glucagon</fullName>
    </recommendedName>
    <component>
        <recommendedName>
            <fullName>Glicentin</fullName>
        </recommendedName>
    </component>
    <component>
        <recommendedName>
            <fullName>Glicentin-related polypeptide</fullName>
            <shortName>GRPP</shortName>
        </recommendedName>
    </component>
    <component>
        <recommendedName>
            <fullName>Oxyntomodulin</fullName>
            <shortName>OXM</shortName>
            <shortName>OXY</shortName>
        </recommendedName>
    </component>
    <component>
        <recommendedName>
            <fullName>Glucagon</fullName>
        </recommendedName>
    </component>
    <component>
        <recommendedName>
            <fullName>Glucagon-like peptide 1</fullName>
            <shortName>GLP-1</shortName>
        </recommendedName>
    </component>
    <component>
        <recommendedName>
            <fullName>Glucagon-like peptide 1(7-37)</fullName>
            <shortName>GLP-1(7-37)</shortName>
        </recommendedName>
    </component>
    <component>
        <recommendedName>
            <fullName>Glucagon-like peptide 1(7-36)</fullName>
            <shortName>GLP-1(7-36)</shortName>
        </recommendedName>
    </component>
    <component>
        <recommendedName>
            <fullName>Glucagon-like peptide 2</fullName>
            <shortName>GLP-2</shortName>
        </recommendedName>
    </component>
</protein>
<comment type="function">
    <molecule>Glucagon</molecule>
    <text evidence="11 13">Plays a key role in glucose metabolism and homeostasis. Regulates blood glucose by increasing gluconeogenesis and decreasing glycolysis. A counterregulatory hormone of insulin, raises plasma glucose levels in response to insulin-induced hypoglycemia. Plays an important role in initiating and maintaining hyperglycemic conditions in diabetes.</text>
</comment>
<comment type="function">
    <molecule>Glucagon-like peptide 1</molecule>
    <text evidence="8 11 12 14">Potent stimulator of glucose-dependent insulin release. Also stimulates insulin release in response to IL6 (PubMed:22037645). Plays important roles on gastric motility and the suppression of plasma glucagon levels. May be involved in the suppression of satiety and stimulation of glucose disposal in peripheral tissues, independent of the actions of insulin. Has growth-promoting activities on intestinal epithelium. May also regulate the hypothalamic pituitary axis (HPA) via effects on LH, TSH, CRH, oxytocin, and vasopressin secretion. Increases islet mass through stimulation of islet neogenesis and pancreatic beta cell proliferation. Inhibits beta cell apoptosis (Probable).</text>
</comment>
<comment type="function">
    <molecule>Glucagon-like peptide 2</molecule>
    <text evidence="10 11 12 14">Stimulates intestinal growth and up-regulates villus height in the small intestine, concomitant with increased crypt cell proliferation and decreased enterocyte apoptosis. The gastrointestinal tract, from the stomach to the colon is the principal target for GLP-2 action. Plays a key role in nutrient homeostasis, enhancing nutrient assimilation through enhanced gastrointestinal function, as well as increasing nutrient disposal. Stimulates intestinal glucose transport and decreases mucosal permeability.</text>
</comment>
<comment type="function">
    <molecule>Oxyntomodulin</molecule>
    <text evidence="11 12">Significantly reduces food intake. Inhibits gastric emptying in humans. Suppression of gastric emptying may lead to increased gastric distension, which may contribute to satiety by causing a sensation of fullness.</text>
</comment>
<comment type="function">
    <molecule>Glicentin</molecule>
    <text evidence="11 12">May modulate gastric acid secretion and the gastro-pyloro-duodenal activity. May play an important role in intestinal mucosal growth in the early period of life.</text>
</comment>
<comment type="subcellular location">
    <subcellularLocation>
        <location evidence="8">Secreted</location>
    </subcellularLocation>
</comment>
<comment type="subcellular location">
    <molecule>Glucagon-like peptide 1</molecule>
    <subcellularLocation>
        <location evidence="8">Secreted</location>
    </subcellularLocation>
</comment>
<comment type="tissue specificity">
    <molecule>Glucagon</molecule>
    <text evidence="8">Secreted in the A cells of the islets of Langerhans.</text>
</comment>
<comment type="tissue specificity">
    <molecule>Glucagon-like peptide 1</molecule>
    <text evidence="8">Secreted in the A cells of the islets of Langerhans (PubMed:22037645). Secreted from enteroendocrine L cells throughout the gastrointestinal tract (PubMed:22037645). Also secreted in selected neurons in the brain.</text>
</comment>
<comment type="tissue specificity">
    <molecule>Glucagon-like peptide 2</molecule>
    <text>Secreted from enteroendocrine cells throughout the gastrointestinal tract. Also secreted in selected neurons in the brain.</text>
</comment>
<comment type="tissue specificity">
    <molecule>Glicentin</molecule>
    <text>Secreted from enteroendocrine cells throughout the gastrointestinal tract.</text>
</comment>
<comment type="tissue specificity">
    <molecule>Oxyntomodulin</molecule>
    <text>Secreted from enteroendocrine cells throughout the gastrointestinal tract.</text>
</comment>
<comment type="induction">
    <molecule>Glucagon</molecule>
    <text evidence="11 13">Release is stimulated by hypoglycemia and inhibited by hyperglycemia, insulin, and somatostatin.</text>
</comment>
<comment type="induction">
    <molecule>Glucagon-like peptide 1</molecule>
    <text evidence="8">Production by pancreatic and inestinal L cells is increased by exercise in an IL6-dependent manner (PubMed:22037645). High-fat diet increases pancreatic content (PubMed:22037645).</text>
</comment>
<comment type="induction">
    <molecule>Glucagon-like peptide 2</molecule>
    <text evidence="10 11 12 14">Induced in response to nutrient ingestion.</text>
</comment>
<comment type="PTM">
    <text evidence="1">Proglucagon is post-translationally processed in a tissue-specific manner in pancreatic A cells and intestinal L cells. In pancreatic A cells, the major bioactive hormone is glucagon cleaved by PCSK2/PC2. In the intestinal L cells PCSK1/PC1 liberates GLP-1, GLP-2, glicentin and oxyntomodulin. GLP-1 is further N-terminally truncated by post-translational processing in the intestinal L cells resulting in GLP-1(7-37) GLP-1-(7-36)amide. The C-terminal amidation is neither important for the metabolism of GLP-1 nor for its effects on the endocrine pancreas (By similarity).</text>
</comment>
<comment type="similarity">
    <text evidence="9">Belongs to the glucagon family.</text>
</comment>
<dbReference type="EMBL" id="Z46845">
    <property type="protein sequence ID" value="CAA86902.1"/>
    <property type="molecule type" value="mRNA"/>
</dbReference>
<dbReference type="EMBL" id="AF276754">
    <property type="protein sequence ID" value="AAK96898.1"/>
    <property type="molecule type" value="mRNA"/>
</dbReference>
<dbReference type="EMBL" id="AK007911">
    <property type="protein sequence ID" value="BAB25344.1"/>
    <property type="molecule type" value="mRNA"/>
</dbReference>
<dbReference type="EMBL" id="AK148544">
    <property type="protein sequence ID" value="BAE28612.1"/>
    <property type="molecule type" value="mRNA"/>
</dbReference>
<dbReference type="EMBL" id="BC012975">
    <property type="protein sequence ID" value="AAH12975.1"/>
    <property type="molecule type" value="mRNA"/>
</dbReference>
<dbReference type="CCDS" id="CCDS16066.1"/>
<dbReference type="PIR" id="A57294">
    <property type="entry name" value="A57294"/>
</dbReference>
<dbReference type="RefSeq" id="NP_032126.1">
    <property type="nucleotide sequence ID" value="NM_008100.4"/>
</dbReference>
<dbReference type="SMR" id="P55095"/>
<dbReference type="FunCoup" id="P55095">
    <property type="interactions" value="634"/>
</dbReference>
<dbReference type="STRING" id="10090.ENSMUSP00000099794"/>
<dbReference type="GlyGen" id="P55095">
    <property type="glycosylation" value="1 site"/>
</dbReference>
<dbReference type="iPTMnet" id="P55095"/>
<dbReference type="PhosphoSitePlus" id="P55095"/>
<dbReference type="PaxDb" id="10090-ENSMUSP00000099794"/>
<dbReference type="ProteomicsDB" id="271001"/>
<dbReference type="ABCD" id="P55095">
    <property type="antibodies" value="1 sequenced antibody"/>
</dbReference>
<dbReference type="Antibodypedia" id="3506">
    <property type="antibodies" value="1901 antibodies from 47 providers"/>
</dbReference>
<dbReference type="DNASU" id="14526"/>
<dbReference type="Ensembl" id="ENSMUST00000102733.10">
    <property type="protein sequence ID" value="ENSMUSP00000099794.4"/>
    <property type="gene ID" value="ENSMUSG00000000394.16"/>
</dbReference>
<dbReference type="GeneID" id="14526"/>
<dbReference type="KEGG" id="mmu:14526"/>
<dbReference type="UCSC" id="uc008jvj.1">
    <property type="organism name" value="mouse"/>
</dbReference>
<dbReference type="AGR" id="MGI:95674"/>
<dbReference type="CTD" id="2641"/>
<dbReference type="MGI" id="MGI:95674">
    <property type="gene designation" value="Gcg"/>
</dbReference>
<dbReference type="VEuPathDB" id="HostDB:ENSMUSG00000000394"/>
<dbReference type="eggNOG" id="ENOG502RYPR">
    <property type="taxonomic scope" value="Eukaryota"/>
</dbReference>
<dbReference type="GeneTree" id="ENSGT00390000005372"/>
<dbReference type="InParanoid" id="P55095"/>
<dbReference type="OMA" id="MNTKRNX"/>
<dbReference type="OrthoDB" id="9904258at2759"/>
<dbReference type="PhylomeDB" id="P55095"/>
<dbReference type="TreeFam" id="TF332333"/>
<dbReference type="Reactome" id="R-MMU-163359">
    <property type="pathway name" value="Glucagon signaling in metabolic regulation"/>
</dbReference>
<dbReference type="Reactome" id="R-MMU-381676">
    <property type="pathway name" value="Glucagon-like Peptide-1 (GLP1) regulates insulin secretion"/>
</dbReference>
<dbReference type="Reactome" id="R-MMU-381771">
    <property type="pathway name" value="Synthesis, secretion, and inactivation of Glucagon-like Peptide-1 (GLP-1)"/>
</dbReference>
<dbReference type="Reactome" id="R-MMU-416476">
    <property type="pathway name" value="G alpha (q) signalling events"/>
</dbReference>
<dbReference type="Reactome" id="R-MMU-418555">
    <property type="pathway name" value="G alpha (s) signalling events"/>
</dbReference>
<dbReference type="Reactome" id="R-MMU-420092">
    <property type="pathway name" value="Glucagon-type ligand receptors"/>
</dbReference>
<dbReference type="Reactome" id="R-MMU-422085">
    <property type="pathway name" value="Synthesis, secretion, and deacylation of Ghrelin"/>
</dbReference>
<dbReference type="BioGRID-ORCS" id="14526">
    <property type="hits" value="0 hits in 62 CRISPR screens"/>
</dbReference>
<dbReference type="ChiTaRS" id="Gcg">
    <property type="organism name" value="mouse"/>
</dbReference>
<dbReference type="PRO" id="PR:P55095"/>
<dbReference type="Proteomes" id="UP000000589">
    <property type="component" value="Chromosome 2"/>
</dbReference>
<dbReference type="RNAct" id="P55095">
    <property type="molecule type" value="protein"/>
</dbReference>
<dbReference type="Bgee" id="ENSMUSG00000000394">
    <property type="expression patterns" value="Expressed in dorsal pancreas and 41 other cell types or tissues"/>
</dbReference>
<dbReference type="ExpressionAtlas" id="P55095">
    <property type="expression patterns" value="baseline and differential"/>
</dbReference>
<dbReference type="GO" id="GO:0005737">
    <property type="term" value="C:cytoplasm"/>
    <property type="evidence" value="ECO:0000314"/>
    <property type="project" value="UniProtKB"/>
</dbReference>
<dbReference type="GO" id="GO:0005615">
    <property type="term" value="C:extracellular space"/>
    <property type="evidence" value="ECO:0000314"/>
    <property type="project" value="UniProtKB"/>
</dbReference>
<dbReference type="GO" id="GO:0005886">
    <property type="term" value="C:plasma membrane"/>
    <property type="evidence" value="ECO:0000314"/>
    <property type="project" value="MGI"/>
</dbReference>
<dbReference type="GO" id="GO:0034774">
    <property type="term" value="C:secretory granule lumen"/>
    <property type="evidence" value="ECO:0000304"/>
    <property type="project" value="Reactome"/>
</dbReference>
<dbReference type="GO" id="GO:0005179">
    <property type="term" value="F:hormone activity"/>
    <property type="evidence" value="ECO:0007669"/>
    <property type="project" value="UniProtKB-KW"/>
</dbReference>
<dbReference type="GO" id="GO:0042802">
    <property type="term" value="F:identical protein binding"/>
    <property type="evidence" value="ECO:0007669"/>
    <property type="project" value="Ensembl"/>
</dbReference>
<dbReference type="GO" id="GO:0048018">
    <property type="term" value="F:receptor ligand activity"/>
    <property type="evidence" value="ECO:0000314"/>
    <property type="project" value="MGI"/>
</dbReference>
<dbReference type="GO" id="GO:0007189">
    <property type="term" value="P:adenylate cyclase-activating G protein-coupled receptor signaling pathway"/>
    <property type="evidence" value="ECO:0000314"/>
    <property type="project" value="UniProtKB"/>
</dbReference>
<dbReference type="GO" id="GO:0071377">
    <property type="term" value="P:cellular response to glucagon stimulus"/>
    <property type="evidence" value="ECO:0000314"/>
    <property type="project" value="MGI"/>
</dbReference>
<dbReference type="GO" id="GO:0006094">
    <property type="term" value="P:gluconeogenesis"/>
    <property type="evidence" value="ECO:0000314"/>
    <property type="project" value="MGI"/>
</dbReference>
<dbReference type="GO" id="GO:0042593">
    <property type="term" value="P:glucose homeostasis"/>
    <property type="evidence" value="ECO:0000314"/>
    <property type="project" value="UniProtKB"/>
</dbReference>
<dbReference type="GO" id="GO:0043066">
    <property type="term" value="P:negative regulation of apoptotic process"/>
    <property type="evidence" value="ECO:0000314"/>
    <property type="project" value="UniProtKB"/>
</dbReference>
<dbReference type="GO" id="GO:1900118">
    <property type="term" value="P:negative regulation of execution phase of apoptosis"/>
    <property type="evidence" value="ECO:0000314"/>
    <property type="project" value="MGI"/>
</dbReference>
<dbReference type="GO" id="GO:0090280">
    <property type="term" value="P:positive regulation of calcium ion import"/>
    <property type="evidence" value="ECO:0000314"/>
    <property type="project" value="UniProtKB"/>
</dbReference>
<dbReference type="GO" id="GO:0070374">
    <property type="term" value="P:positive regulation of ERK1 and ERK2 cascade"/>
    <property type="evidence" value="ECO:0000314"/>
    <property type="project" value="UniProtKB"/>
</dbReference>
<dbReference type="GO" id="GO:0045722">
    <property type="term" value="P:positive regulation of gluconeogenesis"/>
    <property type="evidence" value="ECO:0000314"/>
    <property type="project" value="MGI"/>
</dbReference>
<dbReference type="GO" id="GO:0035774">
    <property type="term" value="P:positive regulation of insulin secretion involved in cellular response to glucose stimulus"/>
    <property type="evidence" value="ECO:0000314"/>
    <property type="project" value="UniProtKB"/>
</dbReference>
<dbReference type="GO" id="GO:0010737">
    <property type="term" value="P:protein kinase A signaling"/>
    <property type="evidence" value="ECO:0000315"/>
    <property type="project" value="UniProtKB"/>
</dbReference>
<dbReference type="GO" id="GO:0050796">
    <property type="term" value="P:regulation of insulin secretion"/>
    <property type="evidence" value="ECO:0000314"/>
    <property type="project" value="UniProtKB"/>
</dbReference>
<dbReference type="GO" id="GO:0014823">
    <property type="term" value="P:response to activity"/>
    <property type="evidence" value="ECO:0000314"/>
    <property type="project" value="UniProtKB"/>
</dbReference>
<dbReference type="Gene3D" id="6.10.250.590">
    <property type="match status" value="3"/>
</dbReference>
<dbReference type="InterPro" id="IPR015550">
    <property type="entry name" value="Glucagon"/>
</dbReference>
<dbReference type="InterPro" id="IPR000532">
    <property type="entry name" value="Glucagon_GIP_secretin_VIP"/>
</dbReference>
<dbReference type="PANTHER" id="PTHR11418">
    <property type="entry name" value="GLUCAGON"/>
    <property type="match status" value="1"/>
</dbReference>
<dbReference type="PANTHER" id="PTHR11418:SF0">
    <property type="entry name" value="PRO-GLUCAGON"/>
    <property type="match status" value="1"/>
</dbReference>
<dbReference type="Pfam" id="PF00123">
    <property type="entry name" value="Hormone_2"/>
    <property type="match status" value="3"/>
</dbReference>
<dbReference type="PRINTS" id="PR00275">
    <property type="entry name" value="GLUCAGON"/>
</dbReference>
<dbReference type="SMART" id="SM00070">
    <property type="entry name" value="GLUCA"/>
    <property type="match status" value="3"/>
</dbReference>
<dbReference type="PROSITE" id="PS00260">
    <property type="entry name" value="GLUCAGON"/>
    <property type="match status" value="4"/>
</dbReference>
<organism>
    <name type="scientific">Mus musculus</name>
    <name type="common">Mouse</name>
    <dbReference type="NCBI Taxonomy" id="10090"/>
    <lineage>
        <taxon>Eukaryota</taxon>
        <taxon>Metazoa</taxon>
        <taxon>Chordata</taxon>
        <taxon>Craniata</taxon>
        <taxon>Vertebrata</taxon>
        <taxon>Euteleostomi</taxon>
        <taxon>Mammalia</taxon>
        <taxon>Eutheria</taxon>
        <taxon>Euarchontoglires</taxon>
        <taxon>Glires</taxon>
        <taxon>Rodentia</taxon>
        <taxon>Myomorpha</taxon>
        <taxon>Muroidea</taxon>
        <taxon>Muridae</taxon>
        <taxon>Murinae</taxon>
        <taxon>Mus</taxon>
        <taxon>Mus</taxon>
    </lineage>
</organism>